<keyword id="KW-0238">DNA-binding</keyword>
<keyword id="KW-0479">Metal-binding</keyword>
<keyword id="KW-0539">Nucleus</keyword>
<keyword id="KW-1185">Reference proteome</keyword>
<keyword id="KW-0804">Transcription</keyword>
<keyword id="KW-0805">Transcription regulation</keyword>
<keyword id="KW-0862">Zinc</keyword>
<keyword id="KW-0863">Zinc-finger</keyword>
<evidence type="ECO:0000250" key="1"/>
<evidence type="ECO:0000255" key="2"/>
<evidence type="ECO:0000255" key="3">
    <source>
        <dbReference type="PROSITE-ProRule" id="PRU00470"/>
    </source>
</evidence>
<evidence type="ECO:0000256" key="4">
    <source>
        <dbReference type="SAM" id="MobiDB-lite"/>
    </source>
</evidence>
<evidence type="ECO:0000269" key="5">
    <source>
    </source>
</evidence>
<evidence type="ECO:0000305" key="6"/>
<accession>A2YFT9</accession>
<dbReference type="EMBL" id="CM000131">
    <property type="protein sequence ID" value="EAZ01950.1"/>
    <property type="molecule type" value="Genomic_DNA"/>
</dbReference>
<dbReference type="SMR" id="A2YFT9"/>
<dbReference type="STRING" id="39946.A2YFT9"/>
<dbReference type="EnsemblPlants" id="BGIOSGA023408-TA">
    <property type="protein sequence ID" value="BGIOSGA023408-PA"/>
    <property type="gene ID" value="BGIOSGA023408"/>
</dbReference>
<dbReference type="Gramene" id="BGIOSGA023408-TA">
    <property type="protein sequence ID" value="BGIOSGA023408-PA"/>
    <property type="gene ID" value="BGIOSGA023408"/>
</dbReference>
<dbReference type="HOGENOM" id="CLU_053048_1_0_1"/>
<dbReference type="OMA" id="GNGNMHN"/>
<dbReference type="Proteomes" id="UP000007015">
    <property type="component" value="Chromosome 6"/>
</dbReference>
<dbReference type="GO" id="GO:0005634">
    <property type="term" value="C:nucleus"/>
    <property type="evidence" value="ECO:0007669"/>
    <property type="project" value="UniProtKB-SubCell"/>
</dbReference>
<dbReference type="GO" id="GO:0003677">
    <property type="term" value="F:DNA binding"/>
    <property type="evidence" value="ECO:0007669"/>
    <property type="project" value="UniProtKB-KW"/>
</dbReference>
<dbReference type="GO" id="GO:0008270">
    <property type="term" value="F:zinc ion binding"/>
    <property type="evidence" value="ECO:0007669"/>
    <property type="project" value="UniProtKB-KW"/>
</dbReference>
<dbReference type="FunFam" id="4.10.1100.10:FF:000001">
    <property type="entry name" value="Squamosa promoter-binding-like protein 14"/>
    <property type="match status" value="1"/>
</dbReference>
<dbReference type="Gene3D" id="4.10.1100.10">
    <property type="entry name" value="Transcription factor, SBP-box domain"/>
    <property type="match status" value="1"/>
</dbReference>
<dbReference type="InterPro" id="IPR044817">
    <property type="entry name" value="SBP-like"/>
</dbReference>
<dbReference type="InterPro" id="IPR004333">
    <property type="entry name" value="SBP_dom"/>
</dbReference>
<dbReference type="InterPro" id="IPR036893">
    <property type="entry name" value="SBP_sf"/>
</dbReference>
<dbReference type="PANTHER" id="PTHR31251:SF114">
    <property type="entry name" value="SQUAMOSA PROMOTER-BINDING-LIKE PROTEIN 10"/>
    <property type="match status" value="1"/>
</dbReference>
<dbReference type="PANTHER" id="PTHR31251">
    <property type="entry name" value="SQUAMOSA PROMOTER-BINDING-LIKE PROTEIN 4"/>
    <property type="match status" value="1"/>
</dbReference>
<dbReference type="Pfam" id="PF03110">
    <property type="entry name" value="SBP"/>
    <property type="match status" value="1"/>
</dbReference>
<dbReference type="SUPFAM" id="SSF103612">
    <property type="entry name" value="SBT domain"/>
    <property type="match status" value="1"/>
</dbReference>
<dbReference type="PROSITE" id="PS51141">
    <property type="entry name" value="ZF_SBP"/>
    <property type="match status" value="1"/>
</dbReference>
<gene>
    <name type="primary">SPL10</name>
    <name type="ORF">OsI_023182</name>
</gene>
<reference key="1">
    <citation type="journal article" date="2005" name="PLoS Biol.">
        <title>The genomes of Oryza sativa: a history of duplications.</title>
        <authorList>
            <person name="Yu J."/>
            <person name="Wang J."/>
            <person name="Lin W."/>
            <person name="Li S."/>
            <person name="Li H."/>
            <person name="Zhou J."/>
            <person name="Ni P."/>
            <person name="Dong W."/>
            <person name="Hu S."/>
            <person name="Zeng C."/>
            <person name="Zhang J."/>
            <person name="Zhang Y."/>
            <person name="Li R."/>
            <person name="Xu Z."/>
            <person name="Li S."/>
            <person name="Li X."/>
            <person name="Zheng H."/>
            <person name="Cong L."/>
            <person name="Lin L."/>
            <person name="Yin J."/>
            <person name="Geng J."/>
            <person name="Li G."/>
            <person name="Shi J."/>
            <person name="Liu J."/>
            <person name="Lv H."/>
            <person name="Li J."/>
            <person name="Wang J."/>
            <person name="Deng Y."/>
            <person name="Ran L."/>
            <person name="Shi X."/>
            <person name="Wang X."/>
            <person name="Wu Q."/>
            <person name="Li C."/>
            <person name="Ren X."/>
            <person name="Wang J."/>
            <person name="Wang X."/>
            <person name="Li D."/>
            <person name="Liu D."/>
            <person name="Zhang X."/>
            <person name="Ji Z."/>
            <person name="Zhao W."/>
            <person name="Sun Y."/>
            <person name="Zhang Z."/>
            <person name="Bao J."/>
            <person name="Han Y."/>
            <person name="Dong L."/>
            <person name="Ji J."/>
            <person name="Chen P."/>
            <person name="Wu S."/>
            <person name="Liu J."/>
            <person name="Xiao Y."/>
            <person name="Bu D."/>
            <person name="Tan J."/>
            <person name="Yang L."/>
            <person name="Ye C."/>
            <person name="Zhang J."/>
            <person name="Xu J."/>
            <person name="Zhou Y."/>
            <person name="Yu Y."/>
            <person name="Zhang B."/>
            <person name="Zhuang S."/>
            <person name="Wei H."/>
            <person name="Liu B."/>
            <person name="Lei M."/>
            <person name="Yu H."/>
            <person name="Li Y."/>
            <person name="Xu H."/>
            <person name="Wei S."/>
            <person name="He X."/>
            <person name="Fang L."/>
            <person name="Zhang Z."/>
            <person name="Zhang Y."/>
            <person name="Huang X."/>
            <person name="Su Z."/>
            <person name="Tong W."/>
            <person name="Li J."/>
            <person name="Tong Z."/>
            <person name="Li S."/>
            <person name="Ye J."/>
            <person name="Wang L."/>
            <person name="Fang L."/>
            <person name="Lei T."/>
            <person name="Chen C.-S."/>
            <person name="Chen H.-C."/>
            <person name="Xu Z."/>
            <person name="Li H."/>
            <person name="Huang H."/>
            <person name="Zhang F."/>
            <person name="Xu H."/>
            <person name="Li N."/>
            <person name="Zhao C."/>
            <person name="Li S."/>
            <person name="Dong L."/>
            <person name="Huang Y."/>
            <person name="Li L."/>
            <person name="Xi Y."/>
            <person name="Qi Q."/>
            <person name="Li W."/>
            <person name="Zhang B."/>
            <person name="Hu W."/>
            <person name="Zhang Y."/>
            <person name="Tian X."/>
            <person name="Jiao Y."/>
            <person name="Liang X."/>
            <person name="Jin J."/>
            <person name="Gao L."/>
            <person name="Zheng W."/>
            <person name="Hao B."/>
            <person name="Liu S.-M."/>
            <person name="Wang W."/>
            <person name="Yuan L."/>
            <person name="Cao M."/>
            <person name="McDermott J."/>
            <person name="Samudrala R."/>
            <person name="Wang J."/>
            <person name="Wong G.K.-S."/>
            <person name="Yang H."/>
        </authorList>
    </citation>
    <scope>NUCLEOTIDE SEQUENCE [LARGE SCALE GENOMIC DNA]</scope>
    <source>
        <strain>cv. 93-11</strain>
    </source>
</reference>
<reference key="2">
    <citation type="journal article" date="2006" name="Plant Physiol.">
        <title>Genomic organization, differential expression, and interaction of SQUAMOSA promoter-binding-like transcription factors and microRNA156 in rice.</title>
        <authorList>
            <person name="Xie K."/>
            <person name="Wu C."/>
            <person name="Xiong L."/>
        </authorList>
    </citation>
    <scope>TISSUE SPECIFICITY</scope>
    <scope>GENE FAMILY</scope>
    <scope>NOMENCLATURE</scope>
</reference>
<reference key="3">
    <citation type="journal article" date="2008" name="Gene">
        <title>Comparative study of SBP-box gene family in Arabidopsis and rice.</title>
        <authorList>
            <person name="Yang Z."/>
            <person name="Wang X."/>
            <person name="Gu S."/>
            <person name="Hu Z."/>
            <person name="Xu H."/>
            <person name="Xu C."/>
        </authorList>
    </citation>
    <scope>GENE FAMILY</scope>
</reference>
<comment type="function">
    <text evidence="1">Trans-acting factor that binds specifically to the consensus nucleotide sequence 5'-TNCGTACAA-3'.</text>
</comment>
<comment type="subcellular location">
    <subcellularLocation>
        <location evidence="6">Nucleus</location>
    </subcellularLocation>
</comment>
<comment type="tissue specificity">
    <text evidence="5">Expressed in stems, leaf sheaths, and young panicles.</text>
</comment>
<comment type="domain">
    <text evidence="1">The SBP-type zinc finger is required for the binding to DNA.</text>
</comment>
<name>SPL10_ORYSI</name>
<feature type="chain" id="PRO_0000308236" description="Squamosa promoter-binding-like protein 10">
    <location>
        <begin position="1"/>
        <end position="426"/>
    </location>
</feature>
<feature type="zinc finger region" description="SBP-type" evidence="3">
    <location>
        <begin position="178"/>
        <end position="255"/>
    </location>
</feature>
<feature type="region of interest" description="Disordered" evidence="4">
    <location>
        <begin position="268"/>
        <end position="290"/>
    </location>
</feature>
<feature type="region of interest" description="Disordered" evidence="4">
    <location>
        <begin position="392"/>
        <end position="426"/>
    </location>
</feature>
<feature type="short sequence motif" description="Bipartite nuclear localization signal" evidence="2">
    <location>
        <begin position="238"/>
        <end position="254"/>
    </location>
</feature>
<feature type="compositionally biased region" description="Low complexity" evidence="4">
    <location>
        <begin position="268"/>
        <end position="287"/>
    </location>
</feature>
<feature type="compositionally biased region" description="Low complexity" evidence="4">
    <location>
        <begin position="401"/>
        <end position="417"/>
    </location>
</feature>
<feature type="binding site" evidence="3">
    <location>
        <position position="181"/>
    </location>
    <ligand>
        <name>Zn(2+)</name>
        <dbReference type="ChEBI" id="CHEBI:29105"/>
        <label>1</label>
    </ligand>
</feature>
<feature type="binding site" evidence="3">
    <location>
        <position position="186"/>
    </location>
    <ligand>
        <name>Zn(2+)</name>
        <dbReference type="ChEBI" id="CHEBI:29105"/>
        <label>1</label>
    </ligand>
</feature>
<feature type="binding site" evidence="3">
    <location>
        <position position="203"/>
    </location>
    <ligand>
        <name>Zn(2+)</name>
        <dbReference type="ChEBI" id="CHEBI:29105"/>
        <label>1</label>
    </ligand>
</feature>
<feature type="binding site" evidence="3">
    <location>
        <position position="206"/>
    </location>
    <ligand>
        <name>Zn(2+)</name>
        <dbReference type="ChEBI" id="CHEBI:29105"/>
        <label>1</label>
    </ligand>
</feature>
<feature type="binding site" evidence="3">
    <location>
        <position position="222"/>
    </location>
    <ligand>
        <name>Zn(2+)</name>
        <dbReference type="ChEBI" id="CHEBI:29105"/>
        <label>2</label>
    </ligand>
</feature>
<feature type="binding site" evidence="3">
    <location>
        <position position="225"/>
    </location>
    <ligand>
        <name>Zn(2+)</name>
        <dbReference type="ChEBI" id="CHEBI:29105"/>
        <label>2</label>
    </ligand>
</feature>
<feature type="binding site" evidence="3">
    <location>
        <position position="229"/>
    </location>
    <ligand>
        <name>Zn(2+)</name>
        <dbReference type="ChEBI" id="CHEBI:29105"/>
        <label>2</label>
    </ligand>
</feature>
<feature type="binding site" evidence="3">
    <location>
        <position position="241"/>
    </location>
    <ligand>
        <name>Zn(2+)</name>
        <dbReference type="ChEBI" id="CHEBI:29105"/>
        <label>2</label>
    </ligand>
</feature>
<organism>
    <name type="scientific">Oryza sativa subsp. indica</name>
    <name type="common">Rice</name>
    <dbReference type="NCBI Taxonomy" id="39946"/>
    <lineage>
        <taxon>Eukaryota</taxon>
        <taxon>Viridiplantae</taxon>
        <taxon>Streptophyta</taxon>
        <taxon>Embryophyta</taxon>
        <taxon>Tracheophyta</taxon>
        <taxon>Spermatophyta</taxon>
        <taxon>Magnoliopsida</taxon>
        <taxon>Liliopsida</taxon>
        <taxon>Poales</taxon>
        <taxon>Poaceae</taxon>
        <taxon>BOP clade</taxon>
        <taxon>Oryzoideae</taxon>
        <taxon>Oryzeae</taxon>
        <taxon>Oryzinae</taxon>
        <taxon>Oryza</taxon>
        <taxon>Oryza sativa</taxon>
    </lineage>
</organism>
<sequence>MMSGRMNAAGDESPFPFGAMQAPGPGAYVGFDHGAAAVAAAAAAAQRAGMLQHHHHHMYDGLDFAAAMQFGGGQDAPPHPQLLALPPSMAAPPPPPMPMPLQMPMTMPMPGDVYPALGIVKREGGGGGQDAAAGRIGLNLGRRTYFSPGDMLAVDRLLMRSRLGGVFGLGFGGAHHQPPRCQAEGCKADLSGAKHYHRRHKVCEYHAKASVVAASGKQQRFCQQCSRFHVLTEFDEAKRSCRKRLAEHNRRRRKPAAAATTAVAAAKDAAAAPVAAGKKPSGGAATSYTGDNKNVVSMSAAKSPISSNTSVISCLPEQGKHAAAAARPTALTLGGAPPHESSAPQIGAMLHHHHHHQQDHMQVSSLVHINGGGGGGSNNILSCSSVCSSALPSTATNGEVSDQNNDNSHNNGGNNNNMHLFEVDFM</sequence>
<proteinExistence type="evidence at transcript level"/>
<protein>
    <recommendedName>
        <fullName>Squamosa promoter-binding-like protein 10</fullName>
    </recommendedName>
</protein>